<accession>C0H425</accession>
<dbReference type="EMBL" id="AL009126">
    <property type="protein sequence ID" value="CAX52633.1"/>
    <property type="molecule type" value="Genomic_DNA"/>
</dbReference>
<dbReference type="RefSeq" id="WP_009967407.1">
    <property type="nucleotide sequence ID" value="NZ_OZ025638.1"/>
</dbReference>
<dbReference type="RefSeq" id="YP_003097738.1">
    <property type="nucleotide sequence ID" value="NC_000964.3"/>
</dbReference>
<dbReference type="SMR" id="C0H425"/>
<dbReference type="STRING" id="224308.BSU18899"/>
<dbReference type="PaxDb" id="224308-BSU18899"/>
<dbReference type="EnsemblBacteria" id="CAX52633">
    <property type="protein sequence ID" value="CAX52633"/>
    <property type="gene ID" value="BSU_18899"/>
</dbReference>
<dbReference type="GeneID" id="8303068"/>
<dbReference type="KEGG" id="bsu:BSU18899"/>
<dbReference type="PATRIC" id="fig|224308.179.peg.2063"/>
<dbReference type="InParanoid" id="C0H425"/>
<dbReference type="OrthoDB" id="9882778at2"/>
<dbReference type="BioCyc" id="BSUB:BSU18899-MONOMER"/>
<dbReference type="Proteomes" id="UP000001570">
    <property type="component" value="Chromosome"/>
</dbReference>
<reference key="1">
    <citation type="journal article" date="1997" name="Nature">
        <title>The complete genome sequence of the Gram-positive bacterium Bacillus subtilis.</title>
        <authorList>
            <person name="Kunst F."/>
            <person name="Ogasawara N."/>
            <person name="Moszer I."/>
            <person name="Albertini A.M."/>
            <person name="Alloni G."/>
            <person name="Azevedo V."/>
            <person name="Bertero M.G."/>
            <person name="Bessieres P."/>
            <person name="Bolotin A."/>
            <person name="Borchert S."/>
            <person name="Borriss R."/>
            <person name="Boursier L."/>
            <person name="Brans A."/>
            <person name="Braun M."/>
            <person name="Brignell S.C."/>
            <person name="Bron S."/>
            <person name="Brouillet S."/>
            <person name="Bruschi C.V."/>
            <person name="Caldwell B."/>
            <person name="Capuano V."/>
            <person name="Carter N.M."/>
            <person name="Choi S.-K."/>
            <person name="Codani J.-J."/>
            <person name="Connerton I.F."/>
            <person name="Cummings N.J."/>
            <person name="Daniel R.A."/>
            <person name="Denizot F."/>
            <person name="Devine K.M."/>
            <person name="Duesterhoeft A."/>
            <person name="Ehrlich S.D."/>
            <person name="Emmerson P.T."/>
            <person name="Entian K.-D."/>
            <person name="Errington J."/>
            <person name="Fabret C."/>
            <person name="Ferrari E."/>
            <person name="Foulger D."/>
            <person name="Fritz C."/>
            <person name="Fujita M."/>
            <person name="Fujita Y."/>
            <person name="Fuma S."/>
            <person name="Galizzi A."/>
            <person name="Galleron N."/>
            <person name="Ghim S.-Y."/>
            <person name="Glaser P."/>
            <person name="Goffeau A."/>
            <person name="Golightly E.J."/>
            <person name="Grandi G."/>
            <person name="Guiseppi G."/>
            <person name="Guy B.J."/>
            <person name="Haga K."/>
            <person name="Haiech J."/>
            <person name="Harwood C.R."/>
            <person name="Henaut A."/>
            <person name="Hilbert H."/>
            <person name="Holsappel S."/>
            <person name="Hosono S."/>
            <person name="Hullo M.-F."/>
            <person name="Itaya M."/>
            <person name="Jones L.-M."/>
            <person name="Joris B."/>
            <person name="Karamata D."/>
            <person name="Kasahara Y."/>
            <person name="Klaerr-Blanchard M."/>
            <person name="Klein C."/>
            <person name="Kobayashi Y."/>
            <person name="Koetter P."/>
            <person name="Koningstein G."/>
            <person name="Krogh S."/>
            <person name="Kumano M."/>
            <person name="Kurita K."/>
            <person name="Lapidus A."/>
            <person name="Lardinois S."/>
            <person name="Lauber J."/>
            <person name="Lazarevic V."/>
            <person name="Lee S.-M."/>
            <person name="Levine A."/>
            <person name="Liu H."/>
            <person name="Masuda S."/>
            <person name="Mauel C."/>
            <person name="Medigue C."/>
            <person name="Medina N."/>
            <person name="Mellado R.P."/>
            <person name="Mizuno M."/>
            <person name="Moestl D."/>
            <person name="Nakai S."/>
            <person name="Noback M."/>
            <person name="Noone D."/>
            <person name="O'Reilly M."/>
            <person name="Ogawa K."/>
            <person name="Ogiwara A."/>
            <person name="Oudega B."/>
            <person name="Park S.-H."/>
            <person name="Parro V."/>
            <person name="Pohl T.M."/>
            <person name="Portetelle D."/>
            <person name="Porwollik S."/>
            <person name="Prescott A.M."/>
            <person name="Presecan E."/>
            <person name="Pujic P."/>
            <person name="Purnelle B."/>
            <person name="Rapoport G."/>
            <person name="Rey M."/>
            <person name="Reynolds S."/>
            <person name="Rieger M."/>
            <person name="Rivolta C."/>
            <person name="Rocha E."/>
            <person name="Roche B."/>
            <person name="Rose M."/>
            <person name="Sadaie Y."/>
            <person name="Sato T."/>
            <person name="Scanlan E."/>
            <person name="Schleich S."/>
            <person name="Schroeter R."/>
            <person name="Scoffone F."/>
            <person name="Sekiguchi J."/>
            <person name="Sekowska A."/>
            <person name="Seror S.J."/>
            <person name="Serror P."/>
            <person name="Shin B.-S."/>
            <person name="Soldo B."/>
            <person name="Sorokin A."/>
            <person name="Tacconi E."/>
            <person name="Takagi T."/>
            <person name="Takahashi H."/>
            <person name="Takemaru K."/>
            <person name="Takeuchi M."/>
            <person name="Tamakoshi A."/>
            <person name="Tanaka T."/>
            <person name="Terpstra P."/>
            <person name="Tognoni A."/>
            <person name="Tosato V."/>
            <person name="Uchiyama S."/>
            <person name="Vandenbol M."/>
            <person name="Vannier F."/>
            <person name="Vassarotti A."/>
            <person name="Viari A."/>
            <person name="Wambutt R."/>
            <person name="Wedler E."/>
            <person name="Wedler H."/>
            <person name="Weitzenegger T."/>
            <person name="Winters P."/>
            <person name="Wipat A."/>
            <person name="Yamamoto H."/>
            <person name="Yamane K."/>
            <person name="Yasumoto K."/>
            <person name="Yata K."/>
            <person name="Yoshida K."/>
            <person name="Yoshikawa H.-F."/>
            <person name="Zumstein E."/>
            <person name="Yoshikawa H."/>
            <person name="Danchin A."/>
        </authorList>
    </citation>
    <scope>NUCLEOTIDE SEQUENCE [LARGE SCALE GENOMIC DNA]</scope>
    <source>
        <strain>168</strain>
    </source>
</reference>
<reference key="2">
    <citation type="journal article" date="2009" name="Microbiology">
        <title>From a consortium sequence to a unified sequence: the Bacillus subtilis 168 reference genome a decade later.</title>
        <authorList>
            <person name="Barbe V."/>
            <person name="Cruveiller S."/>
            <person name="Kunst F."/>
            <person name="Lenoble P."/>
            <person name="Meurice G."/>
            <person name="Sekowska A."/>
            <person name="Vallenet D."/>
            <person name="Wang T."/>
            <person name="Moszer I."/>
            <person name="Medigue C."/>
            <person name="Danchin A."/>
        </authorList>
    </citation>
    <scope>IDENTIFICATION</scope>
</reference>
<keyword id="KW-1185">Reference proteome</keyword>
<sequence>MNFLLDLFTNWTFDKVLDYTLAAVIWSVFKSRSKQNKYPGYFEKIRRYRNLHPLLRSLSMRVLLSITIHPYMFS</sequence>
<gene>
    <name type="primary">yozX</name>
    <name type="ordered locus">BSU18899</name>
</gene>
<protein>
    <recommendedName>
        <fullName>Putative protein YozX</fullName>
    </recommendedName>
</protein>
<name>YOZX_BACSU</name>
<feature type="chain" id="PRO_0000389487" description="Putative protein YozX">
    <location>
        <begin position="1"/>
        <end position="74"/>
    </location>
</feature>
<proteinExistence type="predicted"/>
<organism>
    <name type="scientific">Bacillus subtilis (strain 168)</name>
    <dbReference type="NCBI Taxonomy" id="224308"/>
    <lineage>
        <taxon>Bacteria</taxon>
        <taxon>Bacillati</taxon>
        <taxon>Bacillota</taxon>
        <taxon>Bacilli</taxon>
        <taxon>Bacillales</taxon>
        <taxon>Bacillaceae</taxon>
        <taxon>Bacillus</taxon>
    </lineage>
</organism>